<protein>
    <recommendedName>
        <fullName evidence="1">V-type ATP synthase beta chain</fullName>
    </recommendedName>
    <alternativeName>
        <fullName evidence="1">V-ATPase subunit B</fullName>
    </alternativeName>
</protein>
<organism>
    <name type="scientific">Borreliella afzelii (strain PKo)</name>
    <name type="common">Borrelia afzelii</name>
    <dbReference type="NCBI Taxonomy" id="390236"/>
    <lineage>
        <taxon>Bacteria</taxon>
        <taxon>Pseudomonadati</taxon>
        <taxon>Spirochaetota</taxon>
        <taxon>Spirochaetia</taxon>
        <taxon>Spirochaetales</taxon>
        <taxon>Borreliaceae</taxon>
        <taxon>Borreliella</taxon>
    </lineage>
</organism>
<dbReference type="EMBL" id="CP000395">
    <property type="protein sequence ID" value="ABH01357.1"/>
    <property type="molecule type" value="Genomic_DNA"/>
</dbReference>
<dbReference type="EMBL" id="CP002933">
    <property type="protein sequence ID" value="AEL69324.1"/>
    <property type="molecule type" value="Genomic_DNA"/>
</dbReference>
<dbReference type="RefSeq" id="WP_004790416.1">
    <property type="nucleotide sequence ID" value="NZ_CP160066.1"/>
</dbReference>
<dbReference type="SMR" id="Q0SP71"/>
<dbReference type="STRING" id="29518.BLA32_03825"/>
<dbReference type="KEGG" id="baf:BAPKO_0094"/>
<dbReference type="KEGG" id="bafz:BafPKo_0091"/>
<dbReference type="PATRIC" id="fig|390236.22.peg.90"/>
<dbReference type="eggNOG" id="COG1156">
    <property type="taxonomic scope" value="Bacteria"/>
</dbReference>
<dbReference type="HOGENOM" id="CLU_022916_2_0_12"/>
<dbReference type="OrthoDB" id="9802718at2"/>
<dbReference type="Proteomes" id="UP000005216">
    <property type="component" value="Chromosome"/>
</dbReference>
<dbReference type="GO" id="GO:0005524">
    <property type="term" value="F:ATP binding"/>
    <property type="evidence" value="ECO:0007669"/>
    <property type="project" value="UniProtKB-UniRule"/>
</dbReference>
<dbReference type="GO" id="GO:0046933">
    <property type="term" value="F:proton-transporting ATP synthase activity, rotational mechanism"/>
    <property type="evidence" value="ECO:0007669"/>
    <property type="project" value="UniProtKB-UniRule"/>
</dbReference>
<dbReference type="GO" id="GO:0042777">
    <property type="term" value="P:proton motive force-driven plasma membrane ATP synthesis"/>
    <property type="evidence" value="ECO:0007669"/>
    <property type="project" value="UniProtKB-UniRule"/>
</dbReference>
<dbReference type="CDD" id="cd18118">
    <property type="entry name" value="ATP-synt_V_A-type_beta_N"/>
    <property type="match status" value="1"/>
</dbReference>
<dbReference type="CDD" id="cd01135">
    <property type="entry name" value="V_A-ATPase_B"/>
    <property type="match status" value="1"/>
</dbReference>
<dbReference type="Gene3D" id="3.40.50.12240">
    <property type="match status" value="1"/>
</dbReference>
<dbReference type="HAMAP" id="MF_00310">
    <property type="entry name" value="ATP_synth_B_arch"/>
    <property type="match status" value="1"/>
</dbReference>
<dbReference type="InterPro" id="IPR055190">
    <property type="entry name" value="ATP-synt_VA_C"/>
</dbReference>
<dbReference type="InterPro" id="IPR004100">
    <property type="entry name" value="ATPase_F1/V1/A1_a/bsu_N"/>
</dbReference>
<dbReference type="InterPro" id="IPR000194">
    <property type="entry name" value="ATPase_F1/V1/A1_a/bsu_nucl-bd"/>
</dbReference>
<dbReference type="InterPro" id="IPR027417">
    <property type="entry name" value="P-loop_NTPase"/>
</dbReference>
<dbReference type="InterPro" id="IPR022879">
    <property type="entry name" value="V-ATPase_su_B/beta"/>
</dbReference>
<dbReference type="NCBIfam" id="NF002555">
    <property type="entry name" value="PRK02118.1"/>
    <property type="match status" value="1"/>
</dbReference>
<dbReference type="NCBIfam" id="NF003235">
    <property type="entry name" value="PRK04196.1"/>
    <property type="match status" value="1"/>
</dbReference>
<dbReference type="PANTHER" id="PTHR43389">
    <property type="entry name" value="V-TYPE PROTON ATPASE SUBUNIT B"/>
    <property type="match status" value="1"/>
</dbReference>
<dbReference type="PANTHER" id="PTHR43389:SF4">
    <property type="entry name" value="V-TYPE PROTON ATPASE SUBUNIT B"/>
    <property type="match status" value="1"/>
</dbReference>
<dbReference type="Pfam" id="PF00006">
    <property type="entry name" value="ATP-synt_ab"/>
    <property type="match status" value="1"/>
</dbReference>
<dbReference type="Pfam" id="PF02874">
    <property type="entry name" value="ATP-synt_ab_N"/>
    <property type="match status" value="1"/>
</dbReference>
<dbReference type="Pfam" id="PF22919">
    <property type="entry name" value="ATP-synt_VA_C"/>
    <property type="match status" value="1"/>
</dbReference>
<dbReference type="SUPFAM" id="SSF52540">
    <property type="entry name" value="P-loop containing nucleoside triphosphate hydrolases"/>
    <property type="match status" value="1"/>
</dbReference>
<name>VATB_BORAP</name>
<gene>
    <name evidence="1" type="primary">atpB</name>
    <name type="ordered locus">BAPKO_0094</name>
    <name type="ordered locus">BafPKo_0091</name>
</gene>
<sequence>MKRVYSKIESIAGNVITVTAQGIKYGELAIVKAKDTSSLAEVIKLDREKVSLQVYGGTRGVSTSDEIKFLGHTMQVSFSDNLLGRIFDGSGNPRDGGPSLDDNLIEIGGPSANPTKRIVPRNMIRTGLPMIDVFNTLVESQKLPIFSVSGEPYNELLVRIALQAEVDLIILGGMGLKHDDYLTFKDSLEKGGALSRTIFFVHTANDSVVESLTVPDISLSVAEKFALKGKKVLVLLTDMTNFADAMKEISITMEQVPSNRGYPGDLYSQLAYRYEKAIDFEGAGSITILAVTTMPGDDVTHPVPDNTGYITEGQYYLKGGRIEPFGSLSRLKQMVNSKTRDDHRTIMDTMIKLYASSKESVEKKAMGFNMTKWDEKLLKYSNMFESKMMDLSVNIPLEEALDLGWDILASCFSPKETGIKTDLIQKYWPKKETY</sequence>
<accession>Q0SP71</accession>
<accession>G0IQT8</accession>
<reference key="1">
    <citation type="journal article" date="2006" name="BMC Genomics">
        <title>Comparative genome analysis: selection pressure on the Borrelia vls cassettes is essential for infectivity.</title>
        <authorList>
            <person name="Gloeckner G."/>
            <person name="Schulte-Spechtel U."/>
            <person name="Schilhabel M."/>
            <person name="Felder M."/>
            <person name="Suehnel J."/>
            <person name="Wilske B."/>
            <person name="Platzer M."/>
        </authorList>
    </citation>
    <scope>NUCLEOTIDE SEQUENCE [LARGE SCALE GENOMIC DNA]</scope>
    <source>
        <strain>PKo</strain>
    </source>
</reference>
<reference key="2">
    <citation type="journal article" date="2011" name="J. Bacteriol.">
        <title>Whole-genome sequences of two Borrelia afzelii and two Borrelia garinii Lyme disease agent isolates.</title>
        <authorList>
            <person name="Casjens S.R."/>
            <person name="Mongodin E.F."/>
            <person name="Qiu W.G."/>
            <person name="Dunn J.J."/>
            <person name="Luft B.J."/>
            <person name="Fraser-Liggett C.M."/>
            <person name="Schutzer S.E."/>
        </authorList>
    </citation>
    <scope>NUCLEOTIDE SEQUENCE [LARGE SCALE GENOMIC DNA]</scope>
    <source>
        <strain>PKo</strain>
    </source>
</reference>
<feature type="chain" id="PRO_1000059365" description="V-type ATP synthase beta chain">
    <location>
        <begin position="1"/>
        <end position="434"/>
    </location>
</feature>
<evidence type="ECO:0000255" key="1">
    <source>
        <dbReference type="HAMAP-Rule" id="MF_00310"/>
    </source>
</evidence>
<keyword id="KW-0066">ATP synthesis</keyword>
<keyword id="KW-0375">Hydrogen ion transport</keyword>
<keyword id="KW-0406">Ion transport</keyword>
<keyword id="KW-0813">Transport</keyword>
<proteinExistence type="inferred from homology"/>
<comment type="function">
    <text evidence="1">Produces ATP from ADP in the presence of a proton gradient across the membrane. The V-type beta chain is a regulatory subunit.</text>
</comment>
<comment type="similarity">
    <text evidence="1">Belongs to the ATPase alpha/beta chains family.</text>
</comment>